<proteinExistence type="evidence at protein level"/>
<sequence>MDRKGKGKQVAGSDSYSGGQKRKNSVEFRDEGLRIKKRKNPEVLQFFEESAEVGYYGGSSDEDDDGLGFLNDMEDEPEVEESSKAGKGEKGKSSFVFPKEEDLNEEEFDRIMEERYKPGSGFLRYADDDIKDAIEMDALAPTSKDPPIWKVKCAIGRERRSVFCLMHKFVELRKIGTKLEIISVFSVDHVKGFIFIEADKEHDVLEACKSLVGIYATRMVLLPKAETPNLLTVQKKTKKVSEGTWARVKNGKYKGDLAQIVAVSDTRNKALIKLIPRIDIQALTQKYGGGVTVQKGQTPAPRLISSSELEEFRPLIQVRRDRDTGITFEHLDSLMLKDGYLYKKVSLDSISSWGVIPTKDELLKFTPVDRKETGDVEWISEIYGEERKKKILPTCREGGKGEGSGGGKGEGSGGGKGEGSRGGKGEGSSDFKSESSYELYNLVCFSRKDFGLIVGVDDKGDGYKVLKEGIDGPVVVTVGKKEMQNGPFDSKFTALDLNKKQISVNDVVKISKGPSEGKQGVVRQVYRGIIFLYDESEEENGGYFCCKSQSCEKVKLFTEESNEKTGGFDGTAFEDFVSSPKSPLSPEKEWQPRERYNSSNQGDIGSTYSIGQKLRIRVGPLKGYLCRVIALRYSDVTVKLDSQHKIFTVKSEHLAEVRDRNTVLSTSGDAGTGSFQPFGMLGTESSTGDWAIGAGTSSEGGNWNIGGPSTDSHESLNIERNMVQLCREKNPWGGSKPTSDVSPTVADDNTSAWANAAAENKPASASDQPGGWNPWGKTPASEAGTVSGWGDTSASNVEASSWEKQGASTSNVADLGSWGTHGGSSGGNKQDEDSVWGKLCEASESSQKKEESSWGKKGGSDGESSWGNKDGNSSASKKDGVSWGQQDKGSDESKGGSAWSNQCGDFGSGKKKDGSSGWNKSAEDSNANSKGVPDWGQPNDGSSWGKKGDGAASWGKKDDGGSWGKKDDGNKDDGGSSWGKKDDGQKDDGGSSWEKKFDGGSSWGKKDDGGSSWGKKDDGGSLWGKKDDGGSSWGKEDDGGSLWGKKDDGESSWGKKDDGESSWGKKDDGGSSWGKKDEGGYSEQTFDRGGRGFGGRRGGGRRGGRDQFGRGSSFGNSEDPAPWSKPSGGSSWGKQDGDGGGSSWGKENDAGGGSSWGKQDNGVGSSWGKQNDGSGGGSSWGKQNDAGGGSSWGKQDSGGDGSSWGKQDGGGDSGSAWGKQNNTSGGSSWGKQSDAGGGSSWGKQDGGGGGSSWGKQDGGGGSGSAWGKQNETSNGSSWGKQNDSGGGSSWGKQDGGGGGSSWGKQNDGGGGSSWGKQGDGGSKPWNEHSGGGRGFGERRGGGGFRGGRNQSGRGGRSFDGGRSSSWKTDNQENTWKSDQSGGSDWKKGWGEDSNNSKPSGSSAGGCAGNWPSWDTNSKKETNDKPGDDSKSAWGTSNDQVNTDNNNDSWNKKPNNDVGTSGEADNAWGGKTNAVAPSPSGSAAWGTGDKKTGW</sequence>
<dbReference type="EMBL" id="B61983">
    <property type="status" value="NOT_ANNOTATED_CDS"/>
    <property type="molecule type" value="Genomic_DNA"/>
</dbReference>
<dbReference type="EMBL" id="B61984">
    <property type="status" value="NOT_ANNOTATED_CDS"/>
    <property type="molecule type" value="Genomic_DNA"/>
</dbReference>
<dbReference type="EMBL" id="CP002688">
    <property type="protein sequence ID" value="AED90724.1"/>
    <property type="molecule type" value="Genomic_DNA"/>
</dbReference>
<dbReference type="RefSeq" id="NP_196049.1">
    <property type="nucleotide sequence ID" value="NM_120511.1"/>
</dbReference>
<dbReference type="PDB" id="8HYJ">
    <property type="method" value="EM"/>
    <property type="resolution" value="4.30 A"/>
    <property type="chains" value="W=1-1493"/>
</dbReference>
<dbReference type="PDBsum" id="8HYJ"/>
<dbReference type="EMDB" id="EMD-35086"/>
<dbReference type="SMR" id="F4JW79"/>
<dbReference type="FunCoup" id="F4JW79">
    <property type="interactions" value="945"/>
</dbReference>
<dbReference type="IntAct" id="F4JW79">
    <property type="interactions" value="2"/>
</dbReference>
<dbReference type="STRING" id="3702.F4JW79"/>
<dbReference type="GlyGen" id="F4JW79">
    <property type="glycosylation" value="1 site"/>
</dbReference>
<dbReference type="iPTMnet" id="F4JW79"/>
<dbReference type="PaxDb" id="3702-AT5G04290.1"/>
<dbReference type="ProteomicsDB" id="234905"/>
<dbReference type="EnsemblPlants" id="AT5G04290.1">
    <property type="protein sequence ID" value="AT5G04290.1"/>
    <property type="gene ID" value="AT5G04290"/>
</dbReference>
<dbReference type="GeneID" id="830308"/>
<dbReference type="Gramene" id="AT5G04290.1">
    <property type="protein sequence ID" value="AT5G04290.1"/>
    <property type="gene ID" value="AT5G04290"/>
</dbReference>
<dbReference type="KEGG" id="ath:AT5G04290"/>
<dbReference type="Araport" id="AT5G04290"/>
<dbReference type="TAIR" id="AT5G04290">
    <property type="gene designation" value="KTF1"/>
</dbReference>
<dbReference type="eggNOG" id="KOG1999">
    <property type="taxonomic scope" value="Eukaryota"/>
</dbReference>
<dbReference type="HOGENOM" id="CLU_003564_0_0_1"/>
<dbReference type="InParanoid" id="F4JW79"/>
<dbReference type="PRO" id="PR:F4JW79"/>
<dbReference type="Proteomes" id="UP000006548">
    <property type="component" value="Chromosome 5"/>
</dbReference>
<dbReference type="ExpressionAtlas" id="F4JW79">
    <property type="expression patterns" value="baseline and differential"/>
</dbReference>
<dbReference type="GO" id="GO:0005654">
    <property type="term" value="C:nucleoplasm"/>
    <property type="evidence" value="ECO:0000314"/>
    <property type="project" value="UniProtKB"/>
</dbReference>
<dbReference type="GO" id="GO:0003682">
    <property type="term" value="F:chromatin binding"/>
    <property type="evidence" value="ECO:0000314"/>
    <property type="project" value="UniProtKB"/>
</dbReference>
<dbReference type="GO" id="GO:0003677">
    <property type="term" value="F:DNA binding"/>
    <property type="evidence" value="ECO:0007669"/>
    <property type="project" value="UniProtKB-KW"/>
</dbReference>
<dbReference type="GO" id="GO:0003723">
    <property type="term" value="F:RNA binding"/>
    <property type="evidence" value="ECO:0000314"/>
    <property type="project" value="UniProtKB"/>
</dbReference>
<dbReference type="GO" id="GO:0006354">
    <property type="term" value="P:DNA-templated transcription elongation"/>
    <property type="evidence" value="ECO:0007669"/>
    <property type="project" value="InterPro"/>
</dbReference>
<dbReference type="GO" id="GO:0080188">
    <property type="term" value="P:gene silencing by siRNA-directed DNA methylation"/>
    <property type="evidence" value="ECO:0000315"/>
    <property type="project" value="UniProtKB"/>
</dbReference>
<dbReference type="GO" id="GO:0031507">
    <property type="term" value="P:heterochromatin formation"/>
    <property type="evidence" value="ECO:0000315"/>
    <property type="project" value="UniProtKB"/>
</dbReference>
<dbReference type="GO" id="GO:0032784">
    <property type="term" value="P:regulation of DNA-templated transcription elongation"/>
    <property type="evidence" value="ECO:0007669"/>
    <property type="project" value="InterPro"/>
</dbReference>
<dbReference type="GO" id="GO:0006357">
    <property type="term" value="P:regulation of transcription by RNA polymerase II"/>
    <property type="evidence" value="ECO:0007669"/>
    <property type="project" value="InterPro"/>
</dbReference>
<dbReference type="GO" id="GO:0030422">
    <property type="term" value="P:siRNA processing"/>
    <property type="evidence" value="ECO:0000315"/>
    <property type="project" value="TAIR"/>
</dbReference>
<dbReference type="CDD" id="cd06081">
    <property type="entry name" value="KOW_Spt5_1"/>
    <property type="match status" value="1"/>
</dbReference>
<dbReference type="CDD" id="cd06084">
    <property type="entry name" value="KOW_Spt5_4"/>
    <property type="match status" value="1"/>
</dbReference>
<dbReference type="CDD" id="cd09888">
    <property type="entry name" value="NGN_Euk"/>
    <property type="match status" value="1"/>
</dbReference>
<dbReference type="FunFam" id="2.30.30.30:FF:000053">
    <property type="entry name" value="Protein RNA-directed DNA methylation 3"/>
    <property type="match status" value="1"/>
</dbReference>
<dbReference type="FunFam" id="3.30.70.940:FF:000010">
    <property type="entry name" value="Protein RNA-directed DNA methylation 3"/>
    <property type="match status" value="1"/>
</dbReference>
<dbReference type="Gene3D" id="2.30.30.30">
    <property type="match status" value="1"/>
</dbReference>
<dbReference type="Gene3D" id="3.30.70.940">
    <property type="entry name" value="NusG, N-terminal domain"/>
    <property type="match status" value="1"/>
</dbReference>
<dbReference type="InterPro" id="IPR005824">
    <property type="entry name" value="KOW"/>
</dbReference>
<dbReference type="InterPro" id="IPR041973">
    <property type="entry name" value="KOW_Spt5_1"/>
</dbReference>
<dbReference type="InterPro" id="IPR041977">
    <property type="entry name" value="KOW_Spt5_4"/>
</dbReference>
<dbReference type="InterPro" id="IPR005100">
    <property type="entry name" value="NGN-domain"/>
</dbReference>
<dbReference type="InterPro" id="IPR036735">
    <property type="entry name" value="NGN_dom_sf"/>
</dbReference>
<dbReference type="InterPro" id="IPR039385">
    <property type="entry name" value="NGN_Euk"/>
</dbReference>
<dbReference type="InterPro" id="IPR014722">
    <property type="entry name" value="Rib_uL2_dom2"/>
</dbReference>
<dbReference type="InterPro" id="IPR039659">
    <property type="entry name" value="SPT5"/>
</dbReference>
<dbReference type="PANTHER" id="PTHR11125:SF8">
    <property type="entry name" value="PROTEIN RNA-DIRECTED DNA METHYLATION 3"/>
    <property type="match status" value="1"/>
</dbReference>
<dbReference type="PANTHER" id="PTHR11125">
    <property type="entry name" value="SUPPRESSOR OF TY 5"/>
    <property type="match status" value="1"/>
</dbReference>
<dbReference type="Pfam" id="PF23042">
    <property type="entry name" value="KOW1_SPT5"/>
    <property type="match status" value="1"/>
</dbReference>
<dbReference type="Pfam" id="PF23291">
    <property type="entry name" value="KOW4_SPT5"/>
    <property type="match status" value="1"/>
</dbReference>
<dbReference type="Pfam" id="PF23037">
    <property type="entry name" value="KOWx_SPT5"/>
    <property type="match status" value="1"/>
</dbReference>
<dbReference type="Pfam" id="PF23348">
    <property type="entry name" value="RDM3_C"/>
    <property type="match status" value="2"/>
</dbReference>
<dbReference type="Pfam" id="PF03439">
    <property type="entry name" value="Spt5-NGN"/>
    <property type="match status" value="1"/>
</dbReference>
<dbReference type="SMART" id="SM00739">
    <property type="entry name" value="KOW"/>
    <property type="match status" value="3"/>
</dbReference>
<keyword id="KW-0002">3D-structure</keyword>
<keyword id="KW-0238">DNA-binding</keyword>
<keyword id="KW-0539">Nucleus</keyword>
<keyword id="KW-1185">Reference proteome</keyword>
<keyword id="KW-0677">Repeat</keyword>
<keyword id="KW-0694">RNA-binding</keyword>
<keyword id="KW-0943">RNA-mediated gene silencing</keyword>
<name>RDM3_ARATH</name>
<evidence type="ECO:0000255" key="1"/>
<evidence type="ECO:0000255" key="2">
    <source>
        <dbReference type="PROSITE-ProRule" id="PRU00768"/>
    </source>
</evidence>
<evidence type="ECO:0000256" key="3">
    <source>
        <dbReference type="SAM" id="MobiDB-lite"/>
    </source>
</evidence>
<evidence type="ECO:0000269" key="4">
    <source>
    </source>
</evidence>
<evidence type="ECO:0000269" key="5">
    <source>
    </source>
</evidence>
<evidence type="ECO:0000269" key="6">
    <source>
    </source>
</evidence>
<evidence type="ECO:0000269" key="7">
    <source>
    </source>
</evidence>
<evidence type="ECO:0000303" key="8">
    <source>
    </source>
</evidence>
<evidence type="ECO:0000303" key="9">
    <source>
    </source>
</evidence>
<evidence type="ECO:0000305" key="10"/>
<evidence type="ECO:0000312" key="11">
    <source>
        <dbReference type="Araport" id="AT5G04290"/>
    </source>
</evidence>
<evidence type="ECO:0000312" key="12">
    <source>
        <dbReference type="EMBL" id="B61983"/>
    </source>
</evidence>
<evidence type="ECO:0000312" key="13">
    <source>
        <dbReference type="Proteomes" id="UP000006548"/>
    </source>
</evidence>
<gene>
    <name evidence="9" type="primary">RDM3</name>
    <name evidence="9" type="synonym">KTF1</name>
    <name evidence="8" type="synonym">SPT5L</name>
    <name evidence="11" type="ordered locus">At5g04290</name>
    <name evidence="12" type="ORF">T19N18.20</name>
</gene>
<protein>
    <recommendedName>
        <fullName evidence="9">Protein RNA-directed DNA methylation 3</fullName>
    </recommendedName>
    <alternativeName>
        <fullName evidence="9">KOW domain-containing transcription factor 1</fullName>
    </alternativeName>
    <alternativeName>
        <fullName evidence="8">Protein SPT5-like</fullName>
    </alternativeName>
</protein>
<comment type="function">
    <text evidence="4 5 6 7">Effector of RNA-directed DNA methylation (RdDM) triggered by small interfering RNAs (siRNAs, 24-nt RNAs). Functions as an adapter protein that binds scaffold transcripts generated by polymerase V and recruits AGO4 and AGO4-bound siRNAs to form an RdDM effector complex (PubMed:19343051, PubMed:19410546). Promotes the expression of 24-nt RNAs (PubMed:19343051). Required for the initial establishment of DNA methylation (PubMed:21150311). Together with AGO4, required for transcriptional gene silencing (TGS) by DNA methylation and repressive histone modifications (H3K9me2) of several chromatin loci (PubMed:21738482).</text>
</comment>
<comment type="subunit">
    <text evidence="4 5 7">Interacts with AGO4 via its C-terminal region and with RNA transcripts (PubMed:19343051, PubMed:19410546). Binds chromatin at loci subject to transcriptional silencing downstream of RNA Polymerase V, but independently from the presence of 24-nt siRNA (PubMed:21738482).</text>
</comment>
<comment type="interaction">
    <interactant intactId="EBI-2352225">
        <id>F4JW79</id>
    </interactant>
    <interactant intactId="EBI-2352199">
        <id>Q9ZVD5</id>
        <label>AGO4</label>
    </interactant>
    <organismsDiffer>false</organismsDiffer>
    <experiments>5</experiments>
</comment>
<comment type="subcellular location">
    <subcellularLocation>
        <location evidence="2">Nucleus</location>
    </subcellularLocation>
    <subcellularLocation>
        <location evidence="5">Nucleus</location>
        <location evidence="5">Nucleoplasm</location>
    </subcellularLocation>
    <text evidence="5">Localized at punctate nuclear foci. Colocalizes with AGO4 and polymerase V in the nucleoplasm.</text>
</comment>
<comment type="disruption phenotype">
    <text evidence="4 5 6 7">Decrease in the accumulation of several 24-nt RNAs (PubMed:19343051). Reduced DNA methylation and released silencing of RNA-directed DNA methylation (RdDM) target loci promoters (e.g. LTI78/RD29A, YKT61/AtGP1 and AtMU1) without abolishing the siRNA triggers (PubMed:19343051, PubMed:19410546, PubMed:21738482). Suppression of gene silencing mediated by ROS1 disruption in the double mutants ros1 rdm3-1, ros1 rdm3-2 and ros1 rdm3-3 (PubMed:19410546). Loss in non-CG methylation at DRM2-dependent sites (PubMed:21150311). Reduced H3K9me2 at IGN5 and IGN26 loci (PubMed:21738482).</text>
</comment>
<reference key="1">
    <citation type="submission" date="1997-11" db="EMBL/GenBank/DDBJ databases">
        <title>A BAC end sequence database for identifying minimal overlaps in Arabidopsis genomic sequencing.</title>
        <authorList>
            <person name="Rounsley S.D."/>
            <person name="Field C.E."/>
            <person name="Bass S."/>
            <person name="Linher K."/>
            <person name="Linher K."/>
            <person name="Golden K."/>
            <person name="Berry K."/>
            <person name="Granger D."/>
            <person name="Suh E."/>
            <person name="Wible C."/>
            <person name="Adams M.D."/>
            <person name="Venter J.C."/>
        </authorList>
    </citation>
    <scope>NUCLEOTIDE SEQUENCE [LARGE SCALE GENOMIC DNA]</scope>
    <source>
        <strain>cv. Columbia</strain>
    </source>
</reference>
<reference key="2">
    <citation type="journal article" date="2017" name="Plant J.">
        <title>Araport11: a complete reannotation of the Arabidopsis thaliana reference genome.</title>
        <authorList>
            <person name="Cheng C.Y."/>
            <person name="Krishnakumar V."/>
            <person name="Chan A.P."/>
            <person name="Thibaud-Nissen F."/>
            <person name="Schobel S."/>
            <person name="Town C.D."/>
        </authorList>
    </citation>
    <scope>GENOME REANNOTATION</scope>
    <source>
        <strain>cv. Columbia</strain>
    </source>
</reference>
<reference key="3">
    <citation type="journal article" date="2009" name="Cell">
        <title>An effector of RNA-directed DNA methylation in arabidopsis is an ARGONAUTE 4- and RNA-binding protein.</title>
        <authorList>
            <person name="He X.-J."/>
            <person name="Hsu Y.-F."/>
            <person name="Zhu S."/>
            <person name="Wierzbicki A.T."/>
            <person name="Pontes O."/>
            <person name="Pikaard C.S."/>
            <person name="Liu H.-L."/>
            <person name="Wang C.-S."/>
            <person name="Jin H."/>
            <person name="Zhu J.-K."/>
        </authorList>
    </citation>
    <scope>FUNCTION</scope>
    <scope>DISRUPTION PHENOTYPE</scope>
    <scope>INTERACTION WITH AGO4 AND RNA TRANSCRIPTS</scope>
    <scope>SUBCELLULAR LOCATION</scope>
    <source>
        <strain>cv. C24</strain>
        <strain>cv. Columbia</strain>
    </source>
</reference>
<reference key="4">
    <citation type="journal article" date="2009" name="EMBO Rep.">
        <title>RNA-directed DNA methylation requires an AGO4-interacting member of the SPT5 elongation factor family.</title>
        <authorList>
            <person name="Bies-Etheve N."/>
            <person name="Pontier D."/>
            <person name="Lahmy S."/>
            <person name="Picart C."/>
            <person name="Vega D."/>
            <person name="Cooke R."/>
            <person name="Lagrange T."/>
        </authorList>
    </citation>
    <scope>FUNCTION</scope>
    <scope>DISRUPTION PHENOTYPE</scope>
    <scope>INTERACTION WITH AGO4</scope>
    <source>
        <strain>cv. Columbia</strain>
    </source>
</reference>
<reference key="5">
    <citation type="journal article" date="2011" name="Epigenetics">
        <title>Identification of genes required for de novo DNA methylation in Arabidopsis.</title>
        <authorList>
            <person name="Greenberg M.V."/>
            <person name="Ausin I."/>
            <person name="Chan S.W."/>
            <person name="Cokus S.J."/>
            <person name="Cuperus J.T."/>
            <person name="Feng S."/>
            <person name="Law J.A."/>
            <person name="Chu C."/>
            <person name="Pellegrini M."/>
            <person name="Carrington J.C."/>
            <person name="Jacobsen S.E."/>
        </authorList>
    </citation>
    <scope>FUNCTION</scope>
    <scope>DISRUPTION PHENOTYPE</scope>
</reference>
<reference key="6">
    <citation type="journal article" date="2011" name="PLoS Genet.">
        <title>Independent chromatin binding of ARGONAUTE4 and SPT5L/KTF1 mediates transcriptional gene silencing.</title>
        <authorList>
            <person name="Rowley M.J."/>
            <person name="Avrutsky M.I."/>
            <person name="Sifuentes C.J."/>
            <person name="Pereira L."/>
            <person name="Wierzbicki A.T."/>
        </authorList>
    </citation>
    <scope>FUNCTION</scope>
    <scope>INTERACTION WITH CHROMATIN</scope>
    <scope>DISRUPTION PHENOTYPE</scope>
    <source>
        <strain>cv. Columbia</strain>
    </source>
</reference>
<accession>F4JW79</accession>
<feature type="chain" id="PRO_0000433488" description="Protein RNA-directed DNA methylation 3">
    <location>
        <begin position="1"/>
        <end position="1493"/>
    </location>
</feature>
<feature type="domain" description="KOW 1" evidence="1">
    <location>
        <begin position="239"/>
        <end position="266"/>
    </location>
</feature>
<feature type="domain" description="KOW 2" evidence="1">
    <location>
        <begin position="501"/>
        <end position="528"/>
    </location>
</feature>
<feature type="domain" description="KOW 3" evidence="1">
    <location>
        <begin position="607"/>
        <end position="634"/>
    </location>
</feature>
<feature type="repeat" description="1" evidence="10">
    <location>
        <begin position="732"/>
        <end position="741"/>
    </location>
</feature>
<feature type="repeat" description="2" evidence="10">
    <location>
        <begin position="775"/>
        <end position="784"/>
    </location>
</feature>
<feature type="repeat" description="3" evidence="10">
    <location>
        <begin position="789"/>
        <end position="797"/>
    </location>
</feature>
<feature type="repeat" description="4" evidence="10">
    <location>
        <begin position="818"/>
        <end position="827"/>
    </location>
</feature>
<feature type="repeat" description="5" evidence="10">
    <location>
        <begin position="836"/>
        <end position="845"/>
    </location>
</feature>
<feature type="repeat" description="6" evidence="10">
    <location>
        <begin position="854"/>
        <end position="863"/>
    </location>
</feature>
<feature type="repeat" description="7" evidence="10">
    <location>
        <begin position="866"/>
        <end position="875"/>
    </location>
</feature>
<feature type="repeat" description="8" evidence="10">
    <location>
        <begin position="883"/>
        <end position="892"/>
    </location>
</feature>
<feature type="repeat" description="9" evidence="10">
    <location>
        <begin position="917"/>
        <end position="926"/>
    </location>
</feature>
<feature type="repeat" description="10" evidence="10">
    <location>
        <begin position="935"/>
        <end position="943"/>
    </location>
</feature>
<feature type="repeat" description="11" evidence="10">
    <location>
        <begin position="944"/>
        <end position="953"/>
    </location>
</feature>
<feature type="repeat" description="12" evidence="10">
    <location>
        <begin position="954"/>
        <end position="962"/>
    </location>
</feature>
<feature type="repeat" description="13" evidence="10">
    <location>
        <begin position="963"/>
        <end position="972"/>
    </location>
</feature>
<feature type="repeat" description="14" evidence="10">
    <location>
        <begin position="978"/>
        <end position="987"/>
    </location>
</feature>
<feature type="repeat" description="15" evidence="10">
    <location>
        <begin position="1003"/>
        <end position="1012"/>
    </location>
</feature>
<feature type="repeat" description="16" evidence="10">
    <location>
        <begin position="1013"/>
        <end position="1022"/>
    </location>
</feature>
<feature type="repeat" description="17" evidence="10">
    <location>
        <begin position="1023"/>
        <end position="1032"/>
    </location>
</feature>
<feature type="repeat" description="18" evidence="10">
    <location>
        <begin position="1033"/>
        <end position="1042"/>
    </location>
</feature>
<feature type="repeat" description="19" evidence="10">
    <location>
        <begin position="1043"/>
        <end position="1052"/>
    </location>
</feature>
<feature type="repeat" description="20" evidence="10">
    <location>
        <begin position="1053"/>
        <end position="1062"/>
    </location>
</feature>
<feature type="repeat" description="21" evidence="10">
    <location>
        <begin position="1063"/>
        <end position="1072"/>
    </location>
</feature>
<feature type="repeat" description="22" evidence="10">
    <location>
        <begin position="1073"/>
        <end position="1082"/>
    </location>
</feature>
<feature type="repeat" description="23" evidence="10">
    <location>
        <begin position="1132"/>
        <end position="1141"/>
    </location>
</feature>
<feature type="repeat" description="24" evidence="10">
    <location>
        <begin position="1144"/>
        <end position="1153"/>
    </location>
</feature>
<feature type="repeat" description="25" evidence="10">
    <location>
        <begin position="1156"/>
        <end position="1165"/>
    </location>
</feature>
<feature type="repeat" description="26" evidence="10">
    <location>
        <begin position="1167"/>
        <end position="1176"/>
    </location>
</feature>
<feature type="repeat" description="27" evidence="10">
    <location>
        <begin position="1180"/>
        <end position="1189"/>
    </location>
</feature>
<feature type="repeat" description="28" evidence="10">
    <location>
        <begin position="1192"/>
        <end position="1201"/>
    </location>
</feature>
<feature type="repeat" description="29" evidence="10">
    <location>
        <begin position="1204"/>
        <end position="1213"/>
    </location>
</feature>
<feature type="repeat" description="30" evidence="10">
    <location>
        <begin position="1217"/>
        <end position="1226"/>
    </location>
</feature>
<feature type="repeat" description="31" evidence="10">
    <location>
        <begin position="1229"/>
        <end position="1238"/>
    </location>
</feature>
<feature type="repeat" description="32" evidence="10">
    <location>
        <begin position="1241"/>
        <end position="1250"/>
    </location>
</feature>
<feature type="repeat" description="33" evidence="10">
    <location>
        <begin position="1253"/>
        <end position="1262"/>
    </location>
</feature>
<feature type="repeat" description="34" evidence="10">
    <location>
        <begin position="1266"/>
        <end position="1275"/>
    </location>
</feature>
<feature type="repeat" description="35" evidence="10">
    <location>
        <begin position="1278"/>
        <end position="1287"/>
    </location>
</feature>
<feature type="repeat" description="36" evidence="10">
    <location>
        <begin position="1290"/>
        <end position="1299"/>
    </location>
</feature>
<feature type="repeat" description="37" evidence="10">
    <location>
        <begin position="1302"/>
        <end position="1311"/>
    </location>
</feature>
<feature type="repeat" description="38" evidence="10">
    <location>
        <begin position="1314"/>
        <end position="1323"/>
    </location>
</feature>
<feature type="repeat" description="39" evidence="10">
    <location>
        <begin position="1389"/>
        <end position="1398"/>
    </location>
</feature>
<feature type="repeat" description="40" evidence="10">
    <location>
        <begin position="1433"/>
        <end position="1442"/>
    </location>
</feature>
<feature type="repeat" description="41" evidence="10">
    <location>
        <begin position="1467"/>
        <end position="1475"/>
    </location>
</feature>
<feature type="repeat" description="42" evidence="10">
    <location>
        <begin position="1484"/>
        <end position="1493"/>
    </location>
</feature>
<feature type="region of interest" description="Disordered" evidence="3">
    <location>
        <begin position="1"/>
        <end position="34"/>
    </location>
</feature>
<feature type="region of interest" description="Disordered" evidence="3">
    <location>
        <begin position="54"/>
        <end position="96"/>
    </location>
</feature>
<feature type="region of interest" description="Disordered" evidence="3">
    <location>
        <begin position="393"/>
        <end position="432"/>
    </location>
</feature>
<feature type="region of interest" description="Disordered" evidence="3">
    <location>
        <begin position="578"/>
        <end position="602"/>
    </location>
</feature>
<feature type="region of interest" description="Disordered" evidence="3">
    <location>
        <begin position="692"/>
        <end position="711"/>
    </location>
</feature>
<feature type="region of interest" description="Disordered" evidence="3">
    <location>
        <begin position="728"/>
        <end position="747"/>
    </location>
</feature>
<feature type="region of interest" description="42 X 9 AA approximate WG/GW-rich tandem repeats" evidence="10">
    <location>
        <begin position="732"/>
        <end position="1493"/>
    </location>
</feature>
<feature type="region of interest" description="Disordered" evidence="3">
    <location>
        <begin position="757"/>
        <end position="1493"/>
    </location>
</feature>
<feature type="short sequence motif" description="Nuclear localization signal" evidence="2">
    <location>
        <begin position="21"/>
        <end position="28"/>
    </location>
</feature>
<feature type="compositionally biased region" description="Basic and acidic residues" evidence="3">
    <location>
        <begin position="24"/>
        <end position="34"/>
    </location>
</feature>
<feature type="compositionally biased region" description="Acidic residues" evidence="3">
    <location>
        <begin position="60"/>
        <end position="80"/>
    </location>
</feature>
<feature type="compositionally biased region" description="Basic and acidic residues" evidence="3">
    <location>
        <begin position="81"/>
        <end position="92"/>
    </location>
</feature>
<feature type="compositionally biased region" description="Gly residues" evidence="3">
    <location>
        <begin position="401"/>
        <end position="417"/>
    </location>
</feature>
<feature type="compositionally biased region" description="Basic and acidic residues" evidence="3">
    <location>
        <begin position="418"/>
        <end position="432"/>
    </location>
</feature>
<feature type="compositionally biased region" description="Basic and acidic residues" evidence="3">
    <location>
        <begin position="586"/>
        <end position="596"/>
    </location>
</feature>
<feature type="compositionally biased region" description="Low complexity" evidence="3">
    <location>
        <begin position="757"/>
        <end position="767"/>
    </location>
</feature>
<feature type="compositionally biased region" description="Polar residues" evidence="3">
    <location>
        <begin position="790"/>
        <end position="812"/>
    </location>
</feature>
<feature type="compositionally biased region" description="Basic and acidic residues" evidence="3">
    <location>
        <begin position="846"/>
        <end position="860"/>
    </location>
</feature>
<feature type="compositionally biased region" description="Polar residues" evidence="3">
    <location>
        <begin position="866"/>
        <end position="875"/>
    </location>
</feature>
<feature type="compositionally biased region" description="Basic and acidic residues" evidence="3">
    <location>
        <begin position="955"/>
        <end position="1090"/>
    </location>
</feature>
<feature type="compositionally biased region" description="Low complexity" evidence="3">
    <location>
        <begin position="1122"/>
        <end position="1134"/>
    </location>
</feature>
<feature type="compositionally biased region" description="Polar residues" evidence="3">
    <location>
        <begin position="1156"/>
        <end position="1172"/>
    </location>
</feature>
<feature type="compositionally biased region" description="Gly residues" evidence="3">
    <location>
        <begin position="1186"/>
        <end position="1213"/>
    </location>
</feature>
<feature type="compositionally biased region" description="Polar residues" evidence="3">
    <location>
        <begin position="1218"/>
        <end position="1231"/>
    </location>
</feature>
<feature type="compositionally biased region" description="Gly residues" evidence="3">
    <location>
        <begin position="1235"/>
        <end position="1264"/>
    </location>
</feature>
<feature type="compositionally biased region" description="Polar residues" evidence="3">
    <location>
        <begin position="1270"/>
        <end position="1283"/>
    </location>
</feature>
<feature type="compositionally biased region" description="Gly residues" evidence="3">
    <location>
        <begin position="1284"/>
        <end position="1321"/>
    </location>
</feature>
<feature type="compositionally biased region" description="Polar residues" evidence="3">
    <location>
        <begin position="1366"/>
        <end position="1382"/>
    </location>
</feature>
<feature type="compositionally biased region" description="Polar residues" evidence="3">
    <location>
        <begin position="1392"/>
        <end position="1401"/>
    </location>
</feature>
<feature type="compositionally biased region" description="Basic and acidic residues" evidence="3">
    <location>
        <begin position="1416"/>
        <end position="1430"/>
    </location>
</feature>
<feature type="compositionally biased region" description="Polar residues" evidence="3">
    <location>
        <begin position="1432"/>
        <end position="1442"/>
    </location>
</feature>
<organism evidence="13">
    <name type="scientific">Arabidopsis thaliana</name>
    <name type="common">Mouse-ear cress</name>
    <dbReference type="NCBI Taxonomy" id="3702"/>
    <lineage>
        <taxon>Eukaryota</taxon>
        <taxon>Viridiplantae</taxon>
        <taxon>Streptophyta</taxon>
        <taxon>Embryophyta</taxon>
        <taxon>Tracheophyta</taxon>
        <taxon>Spermatophyta</taxon>
        <taxon>Magnoliopsida</taxon>
        <taxon>eudicotyledons</taxon>
        <taxon>Gunneridae</taxon>
        <taxon>Pentapetalae</taxon>
        <taxon>rosids</taxon>
        <taxon>malvids</taxon>
        <taxon>Brassicales</taxon>
        <taxon>Brassicaceae</taxon>
        <taxon>Camelineae</taxon>
        <taxon>Arabidopsis</taxon>
    </lineage>
</organism>